<reference key="1">
    <citation type="submission" date="2008-04" db="EMBL/GenBank/DDBJ databases">
        <authorList>
            <consortium name="NIH - Zebrafish Gene Collection (ZGC) project"/>
        </authorList>
    </citation>
    <scope>NUCLEOTIDE SEQUENCE [LARGE SCALE MRNA]</scope>
</reference>
<reference key="2">
    <citation type="journal article" date="2003" name="J. Biol. Chem.">
        <title>Characterization of prominin-2, a new member of the prominin family of pentaspan membrane glycoproteins.</title>
        <authorList>
            <person name="Fargeas C.A."/>
            <person name="Florek M."/>
            <person name="Huttner W.B."/>
            <person name="Corbeil D."/>
        </authorList>
    </citation>
    <scope>NUCLEOTIDE SEQUENCE [MRNA] OF 1-713</scope>
    <source>
        <tissue>Liver</tissue>
    </source>
</reference>
<name>PRM1A_DANRE</name>
<proteinExistence type="evidence at transcript level"/>
<sequence length="826" mass="91947">MLWKTALIFLCWGLTSGELQNGLSATPAAPARRTLDFGFVPSGVYDTVAYYEPGAIGILFNMMHAFLFVVQPNPFPEDLVISAAKDKFGAIQSEYQKVIYYELGFVVCAALGLLFTVLLPLVGLLFCLCRCCDNCGGEMHQRQRKNADCLRGLLTTLLLTTTFIITAGVLCAYAANQNLSSQLKGMRRLVKSNLKDLHTFANQTPAQIDYLISRYGTVKEQVLHDLENVGVILGGRIHEELGKEVKPALDATLSMTGTMRDTKDALENVSLTLETLQEGTVKLQANLSVVRNSLRNALNDPVCVDAPAPEICRNIRNSIPKLEIAANYSSLPDVTDQLNKVNDVLKTDLSQIVAKGIASFNDTPAMVTAQTRNIVEGVKVLLDDIGNNITSFSKMLPVHSSLANFTRMISHTHSQIEDIYPQIDQMDFYRWIGCITLCCMIVLILTFNFLGLLCGILGFDRHASPTTRGCVSNTGGNFLMAGVGFSFLFSWVLMGVITALFLAGGNLEKLVCEPFQTRQLFKVLDTPYLVNSAWRNFIPGYLYNDPEMDLTAYSLYSNCKDNRGIYSALHLDRIFNISSFFNTSVYSKDVSRKFEGLKVDLRGIILLESEGKVNLNNFSETGINEIDFAAYLEEVNKGVTRIDLIDFANQLDAQADQLSKGTLQTSLKGHANTIRQIHIQQVVPLEQSMSTLNQSIRLLERTSSDLPLRVEDVLKAVDDAQNLISYNATFVINQETEKYKQNIIGYFKQYIDWIRTSLALEVATCKPLSNIVDTVEILGCGFLLDSMNTFWFGLGCCTLFLLPSIILSVKLAKFYRRMDTEDVYDE</sequence>
<comment type="function">
    <text evidence="1">May play a role in cell differentiation, proliferation and apoptosis. Binds cholesterol in cholesterol-containing plasma membrane microdomains and may play a role in the organization of the apical plasma membrane in epithelial cells. Involved in regulation of MAPK and Akt signaling pathways (By similarity).</text>
</comment>
<comment type="subcellular location">
    <subcellularLocation>
        <location evidence="1">Apical cell membrane</location>
        <topology evidence="1">Multi-pass membrane protein</topology>
    </subcellularLocation>
    <subcellularLocation>
        <location evidence="1">Cell projection</location>
        <location evidence="1">Microvillus membrane</location>
        <topology evidence="1">Multi-pass membrane protein</topology>
    </subcellularLocation>
    <subcellularLocation>
        <location evidence="1">Endoplasmic reticulum</location>
    </subcellularLocation>
    <subcellularLocation>
        <location evidence="1">Endoplasmic reticulum-Golgi intermediate compartment</location>
    </subcellularLocation>
</comment>
<comment type="similarity">
    <text evidence="3">Belongs to the prominin family.</text>
</comment>
<accession>Q9W735</accession>
<accession>B3DJD7</accession>
<dbReference type="EMBL" id="BC163446">
    <property type="protein sequence ID" value="AAI63446.1"/>
    <property type="molecule type" value="mRNA"/>
</dbReference>
<dbReference type="EMBL" id="AF160970">
    <property type="protein sequence ID" value="AAD44341.1"/>
    <property type="molecule type" value="mRNA"/>
</dbReference>
<dbReference type="RefSeq" id="NP_001108615.2">
    <property type="nucleotide sequence ID" value="NM_001115143.2"/>
</dbReference>
<dbReference type="SMR" id="Q9W735"/>
<dbReference type="FunCoup" id="Q9W735">
    <property type="interactions" value="857"/>
</dbReference>
<dbReference type="STRING" id="7955.ENSDARP00000135195"/>
<dbReference type="GlyCosmos" id="Q9W735">
    <property type="glycosylation" value="10 sites, No reported glycans"/>
</dbReference>
<dbReference type="PaxDb" id="7955-ENSDARP00000096190"/>
<dbReference type="GeneID" id="322857"/>
<dbReference type="KEGG" id="dre:322857"/>
<dbReference type="AGR" id="ZFIN:ZDB-GENE-030131-1577"/>
<dbReference type="CTD" id="322857"/>
<dbReference type="ZFIN" id="ZDB-GENE-030131-1577">
    <property type="gene designation" value="prom1a"/>
</dbReference>
<dbReference type="eggNOG" id="KOG4331">
    <property type="taxonomic scope" value="Eukaryota"/>
</dbReference>
<dbReference type="InParanoid" id="Q9W735"/>
<dbReference type="OrthoDB" id="6229420at2759"/>
<dbReference type="PhylomeDB" id="Q9W735"/>
<dbReference type="PRO" id="PR:Q9W735"/>
<dbReference type="Proteomes" id="UP000000437">
    <property type="component" value="Chromosome 14"/>
</dbReference>
<dbReference type="GO" id="GO:0016324">
    <property type="term" value="C:apical plasma membrane"/>
    <property type="evidence" value="ECO:0007669"/>
    <property type="project" value="UniProtKB-SubCell"/>
</dbReference>
<dbReference type="GO" id="GO:0009986">
    <property type="term" value="C:cell surface"/>
    <property type="evidence" value="ECO:0000318"/>
    <property type="project" value="GO_Central"/>
</dbReference>
<dbReference type="GO" id="GO:0005929">
    <property type="term" value="C:cilium"/>
    <property type="evidence" value="ECO:0000318"/>
    <property type="project" value="GO_Central"/>
</dbReference>
<dbReference type="GO" id="GO:0005783">
    <property type="term" value="C:endoplasmic reticulum"/>
    <property type="evidence" value="ECO:0000250"/>
    <property type="project" value="UniProtKB"/>
</dbReference>
<dbReference type="GO" id="GO:0005793">
    <property type="term" value="C:endoplasmic reticulum-Golgi intermediate compartment"/>
    <property type="evidence" value="ECO:0000250"/>
    <property type="project" value="UniProtKB"/>
</dbReference>
<dbReference type="GO" id="GO:0005902">
    <property type="term" value="C:microvillus"/>
    <property type="evidence" value="ECO:0000318"/>
    <property type="project" value="GO_Central"/>
</dbReference>
<dbReference type="GO" id="GO:0031528">
    <property type="term" value="C:microvillus membrane"/>
    <property type="evidence" value="ECO:0007669"/>
    <property type="project" value="UniProtKB-SubCell"/>
</dbReference>
<dbReference type="GO" id="GO:0005886">
    <property type="term" value="C:plasma membrane"/>
    <property type="evidence" value="ECO:0000250"/>
    <property type="project" value="UniProtKB"/>
</dbReference>
<dbReference type="GO" id="GO:0071914">
    <property type="term" value="C:prominosome"/>
    <property type="evidence" value="ECO:0000318"/>
    <property type="project" value="GO_Central"/>
</dbReference>
<dbReference type="GO" id="GO:0015485">
    <property type="term" value="F:cholesterol binding"/>
    <property type="evidence" value="ECO:0000318"/>
    <property type="project" value="GO_Central"/>
</dbReference>
<dbReference type="InterPro" id="IPR008795">
    <property type="entry name" value="Prominin"/>
</dbReference>
<dbReference type="PANTHER" id="PTHR22730">
    <property type="entry name" value="PROMININ PROM PROTEIN"/>
    <property type="match status" value="1"/>
</dbReference>
<dbReference type="PANTHER" id="PTHR22730:SF3">
    <property type="entry name" value="PROMININ-1"/>
    <property type="match status" value="1"/>
</dbReference>
<dbReference type="Pfam" id="PF05478">
    <property type="entry name" value="Prominin"/>
    <property type="match status" value="1"/>
</dbReference>
<organism>
    <name type="scientific">Danio rerio</name>
    <name type="common">Zebrafish</name>
    <name type="synonym">Brachydanio rerio</name>
    <dbReference type="NCBI Taxonomy" id="7955"/>
    <lineage>
        <taxon>Eukaryota</taxon>
        <taxon>Metazoa</taxon>
        <taxon>Chordata</taxon>
        <taxon>Craniata</taxon>
        <taxon>Vertebrata</taxon>
        <taxon>Euteleostomi</taxon>
        <taxon>Actinopterygii</taxon>
        <taxon>Neopterygii</taxon>
        <taxon>Teleostei</taxon>
        <taxon>Ostariophysi</taxon>
        <taxon>Cypriniformes</taxon>
        <taxon>Danionidae</taxon>
        <taxon>Danioninae</taxon>
        <taxon>Danio</taxon>
    </lineage>
</organism>
<feature type="chain" id="PRO_0000218280" description="Prominin-1-A">
    <location>
        <begin position="1"/>
        <end position="826"/>
    </location>
</feature>
<feature type="transmembrane region" description="Helical" evidence="2">
    <location>
        <begin position="50"/>
        <end position="70"/>
    </location>
</feature>
<feature type="transmembrane region" description="Helical" evidence="2">
    <location>
        <begin position="106"/>
        <end position="126"/>
    </location>
</feature>
<feature type="transmembrane region" description="Helical" evidence="2">
    <location>
        <begin position="153"/>
        <end position="173"/>
    </location>
</feature>
<feature type="transmembrane region" description="Helical" evidence="2">
    <location>
        <begin position="439"/>
        <end position="459"/>
    </location>
</feature>
<feature type="transmembrane region" description="Helical" evidence="2">
    <location>
        <begin position="483"/>
        <end position="503"/>
    </location>
</feature>
<feature type="glycosylation site" description="N-linked (GlcNAc...) asparagine" evidence="2">
    <location>
        <position position="178"/>
    </location>
</feature>
<feature type="glycosylation site" description="N-linked (GlcNAc...) asparagine" evidence="2">
    <location>
        <position position="268"/>
    </location>
</feature>
<feature type="glycosylation site" description="N-linked (GlcNAc...) asparagine" evidence="2">
    <location>
        <position position="286"/>
    </location>
</feature>
<feature type="glycosylation site" description="N-linked (GlcNAc...) asparagine" evidence="2">
    <location>
        <position position="327"/>
    </location>
</feature>
<feature type="glycosylation site" description="N-linked (GlcNAc...) asparagine" evidence="2">
    <location>
        <position position="388"/>
    </location>
</feature>
<feature type="glycosylation site" description="N-linked (GlcNAc...) asparagine" evidence="2">
    <location>
        <position position="404"/>
    </location>
</feature>
<feature type="glycosylation site" description="N-linked (GlcNAc...) asparagine" evidence="2">
    <location>
        <position position="576"/>
    </location>
</feature>
<feature type="glycosylation site" description="N-linked (GlcNAc...) asparagine" evidence="2">
    <location>
        <position position="582"/>
    </location>
</feature>
<feature type="glycosylation site" description="N-linked (GlcNAc...) asparagine" evidence="2">
    <location>
        <position position="617"/>
    </location>
</feature>
<feature type="glycosylation site" description="N-linked (GlcNAc...) asparagine" evidence="2">
    <location>
        <position position="693"/>
    </location>
</feature>
<feature type="sequence conflict" description="In Ref. 2; AAD44341." evidence="3" ref="2">
    <original>V</original>
    <variation>I</variation>
    <location>
        <position position="122"/>
    </location>
</feature>
<feature type="sequence conflict" description="In Ref. 2; AAD44341." evidence="3" ref="2">
    <original>LRGL</original>
    <variation>FEDF</variation>
    <location>
        <begin position="150"/>
        <end position="153"/>
    </location>
</feature>
<feature type="sequence conflict" description="In Ref. 2; AAD44341." evidence="3" ref="2">
    <original>F</original>
    <variation>L</variation>
    <location>
        <position position="478"/>
    </location>
</feature>
<feature type="sequence conflict" description="In Ref. 2; AAD44341." evidence="3" ref="2">
    <original>T</original>
    <variation>A</variation>
    <location>
        <position position="583"/>
    </location>
</feature>
<feature type="sequence conflict" description="In Ref. 2; AAD44341." evidence="3" ref="2">
    <original>VN</original>
    <variation>LS</variation>
    <location>
        <begin position="613"/>
        <end position="614"/>
    </location>
</feature>
<feature type="sequence conflict" description="In Ref. 2; AAD44341." evidence="3" ref="2">
    <original>N</original>
    <variation>T</variation>
    <location>
        <position position="616"/>
    </location>
</feature>
<feature type="sequence conflict" description="In Ref. 2; AAD44341." evidence="3" ref="2">
    <original>S</original>
    <variation>T</variation>
    <location>
        <position position="619"/>
    </location>
</feature>
<feature type="sequence conflict" description="In Ref. 2; AAD44341." evidence="3" ref="2">
    <original>ED</original>
    <variation>GR</variation>
    <location>
        <begin position="711"/>
        <end position="712"/>
    </location>
</feature>
<evidence type="ECO:0000250" key="1"/>
<evidence type="ECO:0000255" key="2"/>
<evidence type="ECO:0000305" key="3"/>
<gene>
    <name type="primary">prom1a</name>
    <name type="synonym">proml1</name>
</gene>
<protein>
    <recommendedName>
        <fullName>Prominin-1-A</fullName>
    </recommendedName>
    <alternativeName>
        <fullName>Prominin-like protein 1</fullName>
    </alternativeName>
</protein>
<keyword id="KW-1003">Cell membrane</keyword>
<keyword id="KW-0966">Cell projection</keyword>
<keyword id="KW-0256">Endoplasmic reticulum</keyword>
<keyword id="KW-0325">Glycoprotein</keyword>
<keyword id="KW-0472">Membrane</keyword>
<keyword id="KW-1185">Reference proteome</keyword>
<keyword id="KW-0812">Transmembrane</keyword>
<keyword id="KW-1133">Transmembrane helix</keyword>